<feature type="chain" id="PRO_0000364623" description="Fructose-1,6-bisphosphatase class 1">
    <location>
        <begin position="1"/>
        <end position="323"/>
    </location>
</feature>
<feature type="binding site" evidence="1">
    <location>
        <position position="90"/>
    </location>
    <ligand>
        <name>Mg(2+)</name>
        <dbReference type="ChEBI" id="CHEBI:18420"/>
        <label>1</label>
    </ligand>
</feature>
<feature type="binding site" evidence="1">
    <location>
        <position position="111"/>
    </location>
    <ligand>
        <name>Mg(2+)</name>
        <dbReference type="ChEBI" id="CHEBI:18420"/>
        <label>1</label>
    </ligand>
</feature>
<feature type="binding site" evidence="1">
    <location>
        <position position="111"/>
    </location>
    <ligand>
        <name>Mg(2+)</name>
        <dbReference type="ChEBI" id="CHEBI:18420"/>
        <label>2</label>
    </ligand>
</feature>
<feature type="binding site" evidence="1">
    <location>
        <position position="113"/>
    </location>
    <ligand>
        <name>Mg(2+)</name>
        <dbReference type="ChEBI" id="CHEBI:18420"/>
        <label>1</label>
    </ligand>
</feature>
<feature type="binding site" evidence="1">
    <location>
        <begin position="114"/>
        <end position="117"/>
    </location>
    <ligand>
        <name>substrate</name>
    </ligand>
</feature>
<feature type="binding site" evidence="1">
    <location>
        <position position="114"/>
    </location>
    <ligand>
        <name>Mg(2+)</name>
        <dbReference type="ChEBI" id="CHEBI:18420"/>
        <label>2</label>
    </ligand>
</feature>
<feature type="binding site" evidence="1">
    <location>
        <position position="222"/>
    </location>
    <ligand>
        <name>substrate</name>
    </ligand>
</feature>
<feature type="binding site" evidence="1">
    <location>
        <position position="253"/>
    </location>
    <ligand>
        <name>substrate</name>
    </ligand>
</feature>
<feature type="binding site" evidence="1">
    <location>
        <position position="259"/>
    </location>
    <ligand>
        <name>Mg(2+)</name>
        <dbReference type="ChEBI" id="CHEBI:18420"/>
        <label>2</label>
    </ligand>
</feature>
<keyword id="KW-0119">Carbohydrate metabolism</keyword>
<keyword id="KW-0963">Cytoplasm</keyword>
<keyword id="KW-0378">Hydrolase</keyword>
<keyword id="KW-0460">Magnesium</keyword>
<keyword id="KW-0479">Metal-binding</keyword>
<keyword id="KW-1185">Reference proteome</keyword>
<protein>
    <recommendedName>
        <fullName evidence="1">Fructose-1,6-bisphosphatase class 1</fullName>
        <shortName evidence="1">FBPase class 1</shortName>
        <ecNumber evidence="1">3.1.3.11</ecNumber>
    </recommendedName>
    <alternativeName>
        <fullName evidence="1">D-fructose-1,6-bisphosphate 1-phosphohydrolase class 1</fullName>
    </alternativeName>
</protein>
<name>F16PA_PELPD</name>
<organism>
    <name type="scientific">Pelobacter propionicus (strain DSM 2379 / NBRC 103807 / OttBd1)</name>
    <dbReference type="NCBI Taxonomy" id="338966"/>
    <lineage>
        <taxon>Bacteria</taxon>
        <taxon>Pseudomonadati</taxon>
        <taxon>Thermodesulfobacteriota</taxon>
        <taxon>Desulfuromonadia</taxon>
        <taxon>Desulfuromonadales</taxon>
        <taxon>Desulfuromonadaceae</taxon>
        <taxon>Pelobacter</taxon>
    </lineage>
</organism>
<proteinExistence type="inferred from homology"/>
<reference key="1">
    <citation type="submission" date="2006-10" db="EMBL/GenBank/DDBJ databases">
        <title>Complete sequence of chromosome of Pelobacter propionicus DSM 2379.</title>
        <authorList>
            <consortium name="US DOE Joint Genome Institute"/>
            <person name="Copeland A."/>
            <person name="Lucas S."/>
            <person name="Lapidus A."/>
            <person name="Barry K."/>
            <person name="Detter J.C."/>
            <person name="Glavina del Rio T."/>
            <person name="Hammon N."/>
            <person name="Israni S."/>
            <person name="Dalin E."/>
            <person name="Tice H."/>
            <person name="Pitluck S."/>
            <person name="Saunders E."/>
            <person name="Brettin T."/>
            <person name="Bruce D."/>
            <person name="Han C."/>
            <person name="Tapia R."/>
            <person name="Schmutz J."/>
            <person name="Larimer F."/>
            <person name="Land M."/>
            <person name="Hauser L."/>
            <person name="Kyrpides N."/>
            <person name="Kim E."/>
            <person name="Lovley D."/>
            <person name="Richardson P."/>
        </authorList>
    </citation>
    <scope>NUCLEOTIDE SEQUENCE [LARGE SCALE GENOMIC DNA]</scope>
    <source>
        <strain>DSM 2379 / NBRC 103807 / OttBd1</strain>
    </source>
</reference>
<accession>A1APW8</accession>
<evidence type="ECO:0000255" key="1">
    <source>
        <dbReference type="HAMAP-Rule" id="MF_01855"/>
    </source>
</evidence>
<gene>
    <name evidence="1" type="primary">fbp</name>
    <name type="ordered locus">Ppro_1776</name>
</gene>
<comment type="catalytic activity">
    <reaction evidence="1">
        <text>beta-D-fructose 1,6-bisphosphate + H2O = beta-D-fructose 6-phosphate + phosphate</text>
        <dbReference type="Rhea" id="RHEA:11064"/>
        <dbReference type="ChEBI" id="CHEBI:15377"/>
        <dbReference type="ChEBI" id="CHEBI:32966"/>
        <dbReference type="ChEBI" id="CHEBI:43474"/>
        <dbReference type="ChEBI" id="CHEBI:57634"/>
        <dbReference type="EC" id="3.1.3.11"/>
    </reaction>
</comment>
<comment type="cofactor">
    <cofactor evidence="1">
        <name>Mg(2+)</name>
        <dbReference type="ChEBI" id="CHEBI:18420"/>
    </cofactor>
    <text evidence="1">Binds 2 magnesium ions per subunit.</text>
</comment>
<comment type="pathway">
    <text evidence="1">Carbohydrate biosynthesis; gluconeogenesis.</text>
</comment>
<comment type="subunit">
    <text evidence="1">Homotetramer.</text>
</comment>
<comment type="subcellular location">
    <subcellularLocation>
        <location evidence="1">Cytoplasm</location>
    </subcellularLocation>
</comment>
<comment type="similarity">
    <text evidence="1">Belongs to the FBPase class 1 family.</text>
</comment>
<sequence length="323" mass="35774">MFGEAGKTKFQIDLRQHLRDQNISDNLVHLICEIAEASKYVINAIRTGDLGVAGTSNLYGEEQLALDVLSDRIIRKRLQHSGVVCNIASEEMEEIFQVTSNPQGMFSVAYDPLDGSSLVDVNLAVGTIVGIYQGSDLLQPGRHMVGAMYILYGPRVSMVYSVGKGVYEFTMNQLMEFTLSREQIQMHPSGDIYSPGGLRKKYCEGNERFIRYLEAKGSKLRYSGGFVPDINQVLIKGKGVFMYPALTDSPNGKLRLLFELNPMAFLIEQAGGAATNGHMPILDIVPESLDQRCPIYLGCRDDVVKAAEFLNTPCKTPHEEPQP</sequence>
<dbReference type="EC" id="3.1.3.11" evidence="1"/>
<dbReference type="EMBL" id="CP000482">
    <property type="protein sequence ID" value="ABK99388.1"/>
    <property type="molecule type" value="Genomic_DNA"/>
</dbReference>
<dbReference type="RefSeq" id="WP_011735665.1">
    <property type="nucleotide sequence ID" value="NC_008609.1"/>
</dbReference>
<dbReference type="SMR" id="A1APW8"/>
<dbReference type="STRING" id="338966.Ppro_1776"/>
<dbReference type="KEGG" id="ppd:Ppro_1776"/>
<dbReference type="eggNOG" id="COG0158">
    <property type="taxonomic scope" value="Bacteria"/>
</dbReference>
<dbReference type="HOGENOM" id="CLU_039977_2_2_7"/>
<dbReference type="OrthoDB" id="9806756at2"/>
<dbReference type="UniPathway" id="UPA00138"/>
<dbReference type="Proteomes" id="UP000006732">
    <property type="component" value="Chromosome"/>
</dbReference>
<dbReference type="GO" id="GO:0005829">
    <property type="term" value="C:cytosol"/>
    <property type="evidence" value="ECO:0007669"/>
    <property type="project" value="TreeGrafter"/>
</dbReference>
<dbReference type="GO" id="GO:0042132">
    <property type="term" value="F:fructose 1,6-bisphosphate 1-phosphatase activity"/>
    <property type="evidence" value="ECO:0007669"/>
    <property type="project" value="UniProtKB-UniRule"/>
</dbReference>
<dbReference type="GO" id="GO:0000287">
    <property type="term" value="F:magnesium ion binding"/>
    <property type="evidence" value="ECO:0007669"/>
    <property type="project" value="UniProtKB-UniRule"/>
</dbReference>
<dbReference type="GO" id="GO:0030388">
    <property type="term" value="P:fructose 1,6-bisphosphate metabolic process"/>
    <property type="evidence" value="ECO:0007669"/>
    <property type="project" value="TreeGrafter"/>
</dbReference>
<dbReference type="GO" id="GO:0006002">
    <property type="term" value="P:fructose 6-phosphate metabolic process"/>
    <property type="evidence" value="ECO:0007669"/>
    <property type="project" value="TreeGrafter"/>
</dbReference>
<dbReference type="GO" id="GO:0006000">
    <property type="term" value="P:fructose metabolic process"/>
    <property type="evidence" value="ECO:0007669"/>
    <property type="project" value="TreeGrafter"/>
</dbReference>
<dbReference type="GO" id="GO:0006094">
    <property type="term" value="P:gluconeogenesis"/>
    <property type="evidence" value="ECO:0007669"/>
    <property type="project" value="UniProtKB-UniRule"/>
</dbReference>
<dbReference type="GO" id="GO:0005986">
    <property type="term" value="P:sucrose biosynthetic process"/>
    <property type="evidence" value="ECO:0007669"/>
    <property type="project" value="TreeGrafter"/>
</dbReference>
<dbReference type="CDD" id="cd00354">
    <property type="entry name" value="FBPase"/>
    <property type="match status" value="1"/>
</dbReference>
<dbReference type="Gene3D" id="3.40.190.80">
    <property type="match status" value="1"/>
</dbReference>
<dbReference type="Gene3D" id="3.30.540.10">
    <property type="entry name" value="Fructose-1,6-Bisphosphatase, subunit A, domain 1"/>
    <property type="match status" value="1"/>
</dbReference>
<dbReference type="HAMAP" id="MF_01855">
    <property type="entry name" value="FBPase_class1"/>
    <property type="match status" value="1"/>
</dbReference>
<dbReference type="InterPro" id="IPR044015">
    <property type="entry name" value="FBPase_C_dom"/>
</dbReference>
<dbReference type="InterPro" id="IPR000146">
    <property type="entry name" value="FBPase_class-1"/>
</dbReference>
<dbReference type="InterPro" id="IPR033391">
    <property type="entry name" value="FBPase_N"/>
</dbReference>
<dbReference type="InterPro" id="IPR028343">
    <property type="entry name" value="FBPtase"/>
</dbReference>
<dbReference type="InterPro" id="IPR020548">
    <property type="entry name" value="Fructose_bisphosphatase_AS"/>
</dbReference>
<dbReference type="InterPro" id="IPR023079">
    <property type="entry name" value="SBPase"/>
</dbReference>
<dbReference type="NCBIfam" id="NF006783">
    <property type="entry name" value="PRK09293.2-4"/>
    <property type="match status" value="1"/>
</dbReference>
<dbReference type="PANTHER" id="PTHR11556">
    <property type="entry name" value="FRUCTOSE-1,6-BISPHOSPHATASE-RELATED"/>
    <property type="match status" value="1"/>
</dbReference>
<dbReference type="PANTHER" id="PTHR11556:SF35">
    <property type="entry name" value="SEDOHEPTULOSE-1,7-BISPHOSPHATASE, CHLOROPLASTIC"/>
    <property type="match status" value="1"/>
</dbReference>
<dbReference type="Pfam" id="PF00316">
    <property type="entry name" value="FBPase"/>
    <property type="match status" value="1"/>
</dbReference>
<dbReference type="Pfam" id="PF18913">
    <property type="entry name" value="FBPase_C"/>
    <property type="match status" value="1"/>
</dbReference>
<dbReference type="PIRSF" id="PIRSF500210">
    <property type="entry name" value="FBPtase"/>
    <property type="match status" value="1"/>
</dbReference>
<dbReference type="PIRSF" id="PIRSF000904">
    <property type="entry name" value="FBPtase_SBPase"/>
    <property type="match status" value="1"/>
</dbReference>
<dbReference type="PRINTS" id="PR01958">
    <property type="entry name" value="S17BPHPHTASE"/>
</dbReference>
<dbReference type="SUPFAM" id="SSF56655">
    <property type="entry name" value="Carbohydrate phosphatase"/>
    <property type="match status" value="1"/>
</dbReference>
<dbReference type="PROSITE" id="PS00124">
    <property type="entry name" value="FBPASE"/>
    <property type="match status" value="1"/>
</dbReference>